<keyword id="KW-0256">Endoplasmic reticulum</keyword>
<keyword id="KW-0325">Glycoprotein</keyword>
<keyword id="KW-0337">GPI-anchor biosynthesis</keyword>
<keyword id="KW-0472">Membrane</keyword>
<keyword id="KW-1185">Reference proteome</keyword>
<keyword id="KW-0812">Transmembrane</keyword>
<keyword id="KW-1133">Transmembrane helix</keyword>
<comment type="function">
    <text evidence="1">Component of the glycosylphosphatidylinositol-anchor (GPI-anchor) transamidase (GPI-T) complex that catalyzes the formation of the linkage between a proprotein and a GPI-anchor and participates in GPI anchored protein biosynthesis.</text>
</comment>
<comment type="pathway">
    <text evidence="1">Glycolipid biosynthesis; glycosylphosphatidylinositol-anchor biosynthesis.</text>
</comment>
<comment type="subunit">
    <text evidence="1">Heteropentamer. Part of the GPI-anchor transamidase complex, consisting of PIGK, PIGT, PIGS, PIGU and GAA1.</text>
</comment>
<comment type="subcellular location">
    <subcellularLocation>
        <location evidence="1">Endoplasmic reticulum membrane</location>
        <topology evidence="1">Multi-pass membrane protein</topology>
    </subcellularLocation>
</comment>
<comment type="similarity">
    <text evidence="3">Belongs to the PIGS family.</text>
</comment>
<gene>
    <name evidence="4" type="primary">Pigs</name>
</gene>
<dbReference type="EMBL" id="BC083862">
    <property type="protein sequence ID" value="AAH83862.1"/>
    <property type="molecule type" value="mRNA"/>
</dbReference>
<dbReference type="RefSeq" id="NP_001006602.1">
    <property type="nucleotide sequence ID" value="NM_001006602.1"/>
</dbReference>
<dbReference type="SMR" id="Q5XI31"/>
<dbReference type="FunCoup" id="Q5XI31">
    <property type="interactions" value="2666"/>
</dbReference>
<dbReference type="STRING" id="10116.ENSRNOP00000015207"/>
<dbReference type="GlyCosmos" id="Q5XI31">
    <property type="glycosylation" value="2 sites, No reported glycans"/>
</dbReference>
<dbReference type="GlyGen" id="Q5XI31">
    <property type="glycosylation" value="2 sites"/>
</dbReference>
<dbReference type="PhosphoSitePlus" id="Q5XI31"/>
<dbReference type="jPOST" id="Q5XI31"/>
<dbReference type="PaxDb" id="10116-ENSRNOP00000015207"/>
<dbReference type="Ensembl" id="ENSRNOT00000015207.6">
    <property type="protein sequence ID" value="ENSRNOP00000015207.4"/>
    <property type="gene ID" value="ENSRNOG00000011366.8"/>
</dbReference>
<dbReference type="GeneID" id="303277"/>
<dbReference type="KEGG" id="rno:303277"/>
<dbReference type="AGR" id="RGD:1359436"/>
<dbReference type="CTD" id="94005"/>
<dbReference type="RGD" id="1359436">
    <property type="gene designation" value="Pigs"/>
</dbReference>
<dbReference type="eggNOG" id="KOG2459">
    <property type="taxonomic scope" value="Eukaryota"/>
</dbReference>
<dbReference type="GeneTree" id="ENSGT00390000017203"/>
<dbReference type="HOGENOM" id="CLU_010026_3_0_1"/>
<dbReference type="InParanoid" id="Q5XI31"/>
<dbReference type="OMA" id="AEHKYAV"/>
<dbReference type="OrthoDB" id="28748at2759"/>
<dbReference type="PhylomeDB" id="Q5XI31"/>
<dbReference type="TreeFam" id="TF105857"/>
<dbReference type="Reactome" id="R-RNO-162791">
    <property type="pathway name" value="Attachment of GPI anchor to uPAR"/>
</dbReference>
<dbReference type="UniPathway" id="UPA00196"/>
<dbReference type="PRO" id="PR:Q5XI31"/>
<dbReference type="Proteomes" id="UP000002494">
    <property type="component" value="Chromosome 10"/>
</dbReference>
<dbReference type="Bgee" id="ENSRNOG00000011366">
    <property type="expression patterns" value="Expressed in ovary and 19 other cell types or tissues"/>
</dbReference>
<dbReference type="GO" id="GO:0042765">
    <property type="term" value="C:GPI-anchor transamidase complex"/>
    <property type="evidence" value="ECO:0000250"/>
    <property type="project" value="UniProtKB"/>
</dbReference>
<dbReference type="GO" id="GO:0016255">
    <property type="term" value="P:attachment of GPI anchor to protein"/>
    <property type="evidence" value="ECO:0000250"/>
    <property type="project" value="UniProtKB"/>
</dbReference>
<dbReference type="GO" id="GO:0006506">
    <property type="term" value="P:GPI anchor biosynthetic process"/>
    <property type="evidence" value="ECO:0007669"/>
    <property type="project" value="UniProtKB-UniPathway"/>
</dbReference>
<dbReference type="InterPro" id="IPR019540">
    <property type="entry name" value="PtdIno-glycan_biosynth_class_S"/>
</dbReference>
<dbReference type="PANTHER" id="PTHR21072">
    <property type="entry name" value="GPI TRANSAMIDASE COMPONENT PIG-S"/>
    <property type="match status" value="1"/>
</dbReference>
<dbReference type="PANTHER" id="PTHR21072:SF13">
    <property type="entry name" value="GPI TRANSAMIDASE COMPONENT PIG-S"/>
    <property type="match status" value="1"/>
</dbReference>
<dbReference type="Pfam" id="PF10510">
    <property type="entry name" value="PIG-S"/>
    <property type="match status" value="1"/>
</dbReference>
<protein>
    <recommendedName>
        <fullName evidence="3">GPI-anchor transamidase component PIGS</fullName>
    </recommendedName>
    <alternativeName>
        <fullName>Phosphatidylinositol-glycan biosynthesis class S protein</fullName>
    </alternativeName>
</protein>
<accession>Q5XI31</accession>
<evidence type="ECO:0000250" key="1">
    <source>
        <dbReference type="UniProtKB" id="Q96S52"/>
    </source>
</evidence>
<evidence type="ECO:0000255" key="2"/>
<evidence type="ECO:0000305" key="3"/>
<evidence type="ECO:0000312" key="4">
    <source>
        <dbReference type="RGD" id="1359436"/>
    </source>
</evidence>
<name>PIGS_RAT</name>
<feature type="initiator methionine" description="Removed" evidence="1">
    <location>
        <position position="1"/>
    </location>
</feature>
<feature type="chain" id="PRO_0000218606" description="GPI-anchor transamidase component PIGS">
    <location>
        <begin position="2"/>
        <end position="555"/>
    </location>
</feature>
<feature type="topological domain" description="Cytoplasmic" evidence="3">
    <location>
        <begin position="2"/>
        <end position="18"/>
    </location>
</feature>
<feature type="transmembrane region" description="Helical" evidence="1">
    <location>
        <begin position="19"/>
        <end position="39"/>
    </location>
</feature>
<feature type="topological domain" description="Lumenal" evidence="3">
    <location>
        <begin position="40"/>
        <end position="517"/>
    </location>
</feature>
<feature type="transmembrane region" description="Helical" evidence="1">
    <location>
        <begin position="518"/>
        <end position="532"/>
    </location>
</feature>
<feature type="topological domain" description="Cytoplasmic" evidence="3">
    <location>
        <begin position="533"/>
        <end position="555"/>
    </location>
</feature>
<feature type="binding site" evidence="1">
    <location>
        <position position="15"/>
    </location>
    <ligand>
        <name>a cardiolipin</name>
        <dbReference type="ChEBI" id="CHEBI:62237"/>
    </ligand>
</feature>
<feature type="binding site" evidence="1">
    <location>
        <position position="18"/>
    </location>
    <ligand>
        <name>a cardiolipin</name>
        <dbReference type="ChEBI" id="CHEBI:62237"/>
    </ligand>
</feature>
<feature type="glycosylation site" description="N-linked (GlcNAc...) asparagine" evidence="2">
    <location>
        <position position="267"/>
    </location>
</feature>
<feature type="glycosylation site" description="N-linked (GlcNAc...) asparagine" evidence="2">
    <location>
        <position position="370"/>
    </location>
</feature>
<organism>
    <name type="scientific">Rattus norvegicus</name>
    <name type="common">Rat</name>
    <dbReference type="NCBI Taxonomy" id="10116"/>
    <lineage>
        <taxon>Eukaryota</taxon>
        <taxon>Metazoa</taxon>
        <taxon>Chordata</taxon>
        <taxon>Craniata</taxon>
        <taxon>Vertebrata</taxon>
        <taxon>Euteleostomi</taxon>
        <taxon>Mammalia</taxon>
        <taxon>Eutheria</taxon>
        <taxon>Euarchontoglires</taxon>
        <taxon>Glires</taxon>
        <taxon>Rodentia</taxon>
        <taxon>Myomorpha</taxon>
        <taxon>Muroidea</taxon>
        <taxon>Muridae</taxon>
        <taxon>Murinae</taxon>
        <taxon>Rattus</taxon>
    </lineage>
</organism>
<sequence>MATAGAAATDLEVVRGKRAALFFAAVAILLGLPLWWKTTETYRAPLPYSEISGLNALQLRLMVPVTVVFTRDSVPLDDQEKLPFTVVHEREIPLKYKMKIKCRFQKAYRRALEHEEEALSLGSVHEAEALLAEPEKQAEGSLTVYVISEHSSLLPQDMMSYIGPERTAIVRGMIHREAFNIIGRRIIHVAQAMSLTEDVLAAALADHLPEDKWSSDKRRPLKSSLGYEITFSLLNPDPKSHDVHWDIEEGVQRYVQPFLNRLSAAGNFSVDSQILYYAMLGVNPRFDPASSSYSLAMHSLPHVINPVESRLGSSAASLYPVLNFLLYVPELAHSPLYIQDKDGAPVATNAFHSPRWGGIMVYNVDPKIYNASELPVRVEVDMAQVMEVFLAQLRLLFGIAQPQVPPKCLLSGPKSEGLMTWELDRLLWARSVENLATATTTLTSLAQLLGKISNIVIKDDVASEVYRAVAAVQKAAEALALGHLSSAFAASQEAVTSSERAFFDPSLLHLLYFPDDQKFAIYIPLFLPMAVPILLSLVKIFLETHKSWKKPEKID</sequence>
<reference key="1">
    <citation type="journal article" date="2004" name="Genome Res.">
        <title>The status, quality, and expansion of the NIH full-length cDNA project: the Mammalian Gene Collection (MGC).</title>
        <authorList>
            <consortium name="The MGC Project Team"/>
        </authorList>
    </citation>
    <scope>NUCLEOTIDE SEQUENCE [LARGE SCALE MRNA]</scope>
    <source>
        <tissue>Kidney</tissue>
    </source>
</reference>
<proteinExistence type="evidence at transcript level"/>